<dbReference type="EC" id="2.8.1.8" evidence="1"/>
<dbReference type="EMBL" id="CP001158">
    <property type="protein sequence ID" value="ACL30081.1"/>
    <property type="molecule type" value="Genomic_DNA"/>
</dbReference>
<dbReference type="RefSeq" id="WP_009874223.1">
    <property type="nucleotide sequence ID" value="NC_011834.1"/>
</dbReference>
<dbReference type="SMR" id="B8D7G6"/>
<dbReference type="KEGG" id="bau:BUAPTUC7_266"/>
<dbReference type="HOGENOM" id="CLU_033144_2_1_6"/>
<dbReference type="UniPathway" id="UPA00538">
    <property type="reaction ID" value="UER00593"/>
</dbReference>
<dbReference type="GO" id="GO:0005737">
    <property type="term" value="C:cytoplasm"/>
    <property type="evidence" value="ECO:0007669"/>
    <property type="project" value="UniProtKB-SubCell"/>
</dbReference>
<dbReference type="GO" id="GO:0051539">
    <property type="term" value="F:4 iron, 4 sulfur cluster binding"/>
    <property type="evidence" value="ECO:0007669"/>
    <property type="project" value="UniProtKB-UniRule"/>
</dbReference>
<dbReference type="GO" id="GO:0016992">
    <property type="term" value="F:lipoate synthase activity"/>
    <property type="evidence" value="ECO:0007669"/>
    <property type="project" value="UniProtKB-UniRule"/>
</dbReference>
<dbReference type="GO" id="GO:0046872">
    <property type="term" value="F:metal ion binding"/>
    <property type="evidence" value="ECO:0007669"/>
    <property type="project" value="UniProtKB-KW"/>
</dbReference>
<dbReference type="FunFam" id="3.20.20.70:FF:000040">
    <property type="entry name" value="Lipoyl synthase"/>
    <property type="match status" value="1"/>
</dbReference>
<dbReference type="Gene3D" id="3.20.20.70">
    <property type="entry name" value="Aldolase class I"/>
    <property type="match status" value="1"/>
</dbReference>
<dbReference type="HAMAP" id="MF_00206">
    <property type="entry name" value="Lipoyl_synth"/>
    <property type="match status" value="1"/>
</dbReference>
<dbReference type="InterPro" id="IPR013785">
    <property type="entry name" value="Aldolase_TIM"/>
</dbReference>
<dbReference type="InterPro" id="IPR006638">
    <property type="entry name" value="Elp3/MiaA/NifB-like_rSAM"/>
</dbReference>
<dbReference type="InterPro" id="IPR031691">
    <property type="entry name" value="LIAS_N"/>
</dbReference>
<dbReference type="InterPro" id="IPR003698">
    <property type="entry name" value="Lipoyl_synth"/>
</dbReference>
<dbReference type="InterPro" id="IPR007197">
    <property type="entry name" value="rSAM"/>
</dbReference>
<dbReference type="NCBIfam" id="TIGR00510">
    <property type="entry name" value="lipA"/>
    <property type="match status" value="1"/>
</dbReference>
<dbReference type="NCBIfam" id="NF004019">
    <property type="entry name" value="PRK05481.1"/>
    <property type="match status" value="1"/>
</dbReference>
<dbReference type="NCBIfam" id="NF009544">
    <property type="entry name" value="PRK12928.1"/>
    <property type="match status" value="1"/>
</dbReference>
<dbReference type="PANTHER" id="PTHR10949">
    <property type="entry name" value="LIPOYL SYNTHASE"/>
    <property type="match status" value="1"/>
</dbReference>
<dbReference type="PANTHER" id="PTHR10949:SF0">
    <property type="entry name" value="LIPOYL SYNTHASE, MITOCHONDRIAL"/>
    <property type="match status" value="1"/>
</dbReference>
<dbReference type="Pfam" id="PF16881">
    <property type="entry name" value="LIAS_N"/>
    <property type="match status" value="1"/>
</dbReference>
<dbReference type="Pfam" id="PF04055">
    <property type="entry name" value="Radical_SAM"/>
    <property type="match status" value="1"/>
</dbReference>
<dbReference type="PIRSF" id="PIRSF005963">
    <property type="entry name" value="Lipoyl_synth"/>
    <property type="match status" value="1"/>
</dbReference>
<dbReference type="SFLD" id="SFLDF00271">
    <property type="entry name" value="lipoyl_synthase"/>
    <property type="match status" value="1"/>
</dbReference>
<dbReference type="SFLD" id="SFLDS00029">
    <property type="entry name" value="Radical_SAM"/>
    <property type="match status" value="1"/>
</dbReference>
<dbReference type="SMART" id="SM00729">
    <property type="entry name" value="Elp3"/>
    <property type="match status" value="1"/>
</dbReference>
<dbReference type="SUPFAM" id="SSF102114">
    <property type="entry name" value="Radical SAM enzymes"/>
    <property type="match status" value="1"/>
</dbReference>
<dbReference type="PROSITE" id="PS51918">
    <property type="entry name" value="RADICAL_SAM"/>
    <property type="match status" value="1"/>
</dbReference>
<keyword id="KW-0004">4Fe-4S</keyword>
<keyword id="KW-0963">Cytoplasm</keyword>
<keyword id="KW-0408">Iron</keyword>
<keyword id="KW-0411">Iron-sulfur</keyword>
<keyword id="KW-0479">Metal-binding</keyword>
<keyword id="KW-0949">S-adenosyl-L-methionine</keyword>
<keyword id="KW-0808">Transferase</keyword>
<accession>B8D7G6</accession>
<comment type="function">
    <text evidence="1">Catalyzes the radical-mediated insertion of two sulfur atoms into the C-6 and C-8 positions of the octanoyl moiety bound to the lipoyl domains of lipoate-dependent enzymes, thereby converting the octanoylated domains into lipoylated derivatives.</text>
</comment>
<comment type="catalytic activity">
    <reaction evidence="1">
        <text>[[Fe-S] cluster scaffold protein carrying a second [4Fe-4S](2+) cluster] + N(6)-octanoyl-L-lysyl-[protein] + 2 oxidized [2Fe-2S]-[ferredoxin] + 2 S-adenosyl-L-methionine + 4 H(+) = [[Fe-S] cluster scaffold protein] + N(6)-[(R)-dihydrolipoyl]-L-lysyl-[protein] + 4 Fe(3+) + 2 hydrogen sulfide + 2 5'-deoxyadenosine + 2 L-methionine + 2 reduced [2Fe-2S]-[ferredoxin]</text>
        <dbReference type="Rhea" id="RHEA:16585"/>
        <dbReference type="Rhea" id="RHEA-COMP:9928"/>
        <dbReference type="Rhea" id="RHEA-COMP:10000"/>
        <dbReference type="Rhea" id="RHEA-COMP:10001"/>
        <dbReference type="Rhea" id="RHEA-COMP:10475"/>
        <dbReference type="Rhea" id="RHEA-COMP:14568"/>
        <dbReference type="Rhea" id="RHEA-COMP:14569"/>
        <dbReference type="ChEBI" id="CHEBI:15378"/>
        <dbReference type="ChEBI" id="CHEBI:17319"/>
        <dbReference type="ChEBI" id="CHEBI:29034"/>
        <dbReference type="ChEBI" id="CHEBI:29919"/>
        <dbReference type="ChEBI" id="CHEBI:33722"/>
        <dbReference type="ChEBI" id="CHEBI:33737"/>
        <dbReference type="ChEBI" id="CHEBI:33738"/>
        <dbReference type="ChEBI" id="CHEBI:57844"/>
        <dbReference type="ChEBI" id="CHEBI:59789"/>
        <dbReference type="ChEBI" id="CHEBI:78809"/>
        <dbReference type="ChEBI" id="CHEBI:83100"/>
        <dbReference type="EC" id="2.8.1.8"/>
    </reaction>
</comment>
<comment type="cofactor">
    <cofactor evidence="1">
        <name>[4Fe-4S] cluster</name>
        <dbReference type="ChEBI" id="CHEBI:49883"/>
    </cofactor>
    <text evidence="1">Binds 2 [4Fe-4S] clusters per subunit. One cluster is coordinated with 3 cysteines and an exchangeable S-adenosyl-L-methionine.</text>
</comment>
<comment type="pathway">
    <text evidence="1">Protein modification; protein lipoylation via endogenous pathway; protein N(6)-(lipoyl)lysine from octanoyl-[acyl-carrier-protein]: step 2/2.</text>
</comment>
<comment type="subcellular location">
    <subcellularLocation>
        <location evidence="1">Cytoplasm</location>
    </subcellularLocation>
</comment>
<comment type="similarity">
    <text evidence="1">Belongs to the radical SAM superfamily. Lipoyl synthase family.</text>
</comment>
<proteinExistence type="inferred from homology"/>
<sequence>MKKNKDVLLKNKILKKLNIINIKNLDNIKEKLKKPDWIKIKIPVNTSRIYQIKNALRKNNLYSVCEEAHCPNLSECFNNGTATFMILGSICTRNCPFCAVFHGRPNPVNVEEPQKLSDTIFDMGINYVVITSVVRDDLYDGGAEHFVNCIKAIKNKNQVKIEILVPDFRGRIELILNIFNNALPDIFNHNIENVPRLYKKIRPGANYQRSLLLLESFKKKYCSVLTKSGLMLGLGEKDVEIIQVMKDLYSSGVTLLTVGQYLQPSIHHLPVKRYIPLSEFENIKKEALSIGFTNAFCGPFVRSSYHASFQSHLPIKNNDINNI</sequence>
<gene>
    <name evidence="1" type="primary">lipA</name>
    <name type="ordered locus">BUAPTUC7_266</name>
</gene>
<evidence type="ECO:0000255" key="1">
    <source>
        <dbReference type="HAMAP-Rule" id="MF_00206"/>
    </source>
</evidence>
<evidence type="ECO:0000255" key="2">
    <source>
        <dbReference type="PROSITE-ProRule" id="PRU01266"/>
    </source>
</evidence>
<organism>
    <name type="scientific">Buchnera aphidicola subsp. Acyrthosiphon pisum (strain Tuc7)</name>
    <dbReference type="NCBI Taxonomy" id="561501"/>
    <lineage>
        <taxon>Bacteria</taxon>
        <taxon>Pseudomonadati</taxon>
        <taxon>Pseudomonadota</taxon>
        <taxon>Gammaproteobacteria</taxon>
        <taxon>Enterobacterales</taxon>
        <taxon>Erwiniaceae</taxon>
        <taxon>Buchnera</taxon>
    </lineage>
</organism>
<feature type="chain" id="PRO_1000124624" description="Lipoyl synthase">
    <location>
        <begin position="1"/>
        <end position="323"/>
    </location>
</feature>
<feature type="domain" description="Radical SAM core" evidence="2">
    <location>
        <begin position="77"/>
        <end position="293"/>
    </location>
</feature>
<feature type="binding site" evidence="1">
    <location>
        <position position="65"/>
    </location>
    <ligand>
        <name>[4Fe-4S] cluster</name>
        <dbReference type="ChEBI" id="CHEBI:49883"/>
        <label>1</label>
    </ligand>
</feature>
<feature type="binding site" evidence="1">
    <location>
        <position position="70"/>
    </location>
    <ligand>
        <name>[4Fe-4S] cluster</name>
        <dbReference type="ChEBI" id="CHEBI:49883"/>
        <label>1</label>
    </ligand>
</feature>
<feature type="binding site" evidence="1">
    <location>
        <position position="76"/>
    </location>
    <ligand>
        <name>[4Fe-4S] cluster</name>
        <dbReference type="ChEBI" id="CHEBI:49883"/>
        <label>1</label>
    </ligand>
</feature>
<feature type="binding site" evidence="1">
    <location>
        <position position="91"/>
    </location>
    <ligand>
        <name>[4Fe-4S] cluster</name>
        <dbReference type="ChEBI" id="CHEBI:49883"/>
        <label>2</label>
        <note>4Fe-4S-S-AdoMet</note>
    </ligand>
</feature>
<feature type="binding site" evidence="1">
    <location>
        <position position="95"/>
    </location>
    <ligand>
        <name>[4Fe-4S] cluster</name>
        <dbReference type="ChEBI" id="CHEBI:49883"/>
        <label>2</label>
        <note>4Fe-4S-S-AdoMet</note>
    </ligand>
</feature>
<feature type="binding site" evidence="1">
    <location>
        <position position="98"/>
    </location>
    <ligand>
        <name>[4Fe-4S] cluster</name>
        <dbReference type="ChEBI" id="CHEBI:49883"/>
        <label>2</label>
        <note>4Fe-4S-S-AdoMet</note>
    </ligand>
</feature>
<feature type="binding site" evidence="1">
    <location>
        <position position="304"/>
    </location>
    <ligand>
        <name>[4Fe-4S] cluster</name>
        <dbReference type="ChEBI" id="CHEBI:49883"/>
        <label>1</label>
    </ligand>
</feature>
<name>LIPA_BUCAT</name>
<protein>
    <recommendedName>
        <fullName evidence="1">Lipoyl synthase</fullName>
        <ecNumber evidence="1">2.8.1.8</ecNumber>
    </recommendedName>
    <alternativeName>
        <fullName evidence="1">Lip-syn</fullName>
        <shortName evidence="1">LS</shortName>
    </alternativeName>
    <alternativeName>
        <fullName evidence="1">Lipoate synthase</fullName>
    </alternativeName>
    <alternativeName>
        <fullName evidence="1">Lipoic acid synthase</fullName>
    </alternativeName>
    <alternativeName>
        <fullName evidence="1">Sulfur insertion protein LipA</fullName>
    </alternativeName>
</protein>
<reference key="1">
    <citation type="journal article" date="2009" name="Science">
        <title>The dynamics and time scale of ongoing genomic erosion in symbiotic bacteria.</title>
        <authorList>
            <person name="Moran N.A."/>
            <person name="McLaughlin H.J."/>
            <person name="Sorek R."/>
        </authorList>
    </citation>
    <scope>NUCLEOTIDE SEQUENCE [LARGE SCALE GENOMIC DNA]</scope>
    <source>
        <strain>Tuc7</strain>
    </source>
</reference>